<feature type="chain" id="PRO_0000079125" description="Nucleoprotein">
    <location>
        <begin position="1"/>
        <end position="498"/>
    </location>
</feature>
<feature type="region of interest" description="Disordered" evidence="2">
    <location>
        <begin position="1"/>
        <end position="23"/>
    </location>
</feature>
<feature type="short sequence motif" description="Unconventional nuclear localization signal" evidence="1">
    <location>
        <begin position="1"/>
        <end position="18"/>
    </location>
</feature>
<feature type="short sequence motif" description="Bipartite nuclear localization signal" evidence="1">
    <location>
        <begin position="198"/>
        <end position="216"/>
    </location>
</feature>
<organismHost>
    <name type="scientific">Aves</name>
    <dbReference type="NCBI Taxonomy" id="8782"/>
</organismHost>
<organismHost>
    <name type="scientific">Homo sapiens</name>
    <name type="common">Human</name>
    <dbReference type="NCBI Taxonomy" id="9606"/>
</organismHost>
<organismHost>
    <name type="scientific">Sus scrofa</name>
    <name type="common">Pig</name>
    <dbReference type="NCBI Taxonomy" id="9823"/>
</organismHost>
<proteinExistence type="evidence at protein level"/>
<gene>
    <name evidence="1" type="primary">NP</name>
</gene>
<reference key="1">
    <citation type="journal article" date="1991" name="J. Virol.">
        <title>Evolution of influenza A virus nucleoprotein genes: implications for the origins of H1N1 human and classical swine viruses.</title>
        <authorList>
            <person name="Gorman O.T."/>
            <person name="Bean W.J."/>
            <person name="Kawaoka Y."/>
            <person name="Donatelli I."/>
            <person name="Guo Y."/>
            <person name="Webster R.G."/>
        </authorList>
    </citation>
    <scope>NUCLEOTIDE SEQUENCE [GENOMIC RNA]</scope>
</reference>
<comment type="function">
    <text evidence="1">Encapsidates the negative strand viral RNA, protecting it from nucleases. The encapsidated genomic RNA is termed the ribonucleoprotein (RNP) and serves as template for transcription and replication. The RNP needs to be localized in the host nucleus to start an infectious cycle, but is too large to diffuse through the nuclear pore complex. NP comprises at least 2 nuclear localization signals that are responsible for the active RNP import into the nucleus through cellular importin alpha/beta pathway. Later in the infection, nclear export of RNPs are mediated through viral proteins NEP interacting with M1 which binds nucleoproteins. It is possible that nucleoprotein binds directly host exportin-1/XPO1 and plays an active role in RNPs nuclear export. M1 interaction with RNP seems to hide nucleoprotein's nuclear localization signals. Soon after a virion infects a new cell, M1 dissociates from the RNP under acidification of the virion driven by M2 protein. Dissociation of M1 from RNP unmasks nucleoprotein's nuclear localization signals, targeting the RNP to the nucleus.</text>
</comment>
<comment type="subunit">
    <text evidence="1">Homomultimerizes to form the nucleocapsid. May bind host exportin-1/XPO1. Binds to viral genomic RNA. Protein-RNA contacts are mediated by a combination of electrostatic interactions between positively charged residues and the phosphate backbone and planar interactions between aromatic side chains and bases.</text>
</comment>
<comment type="subcellular location">
    <subcellularLocation>
        <location evidence="1">Virion</location>
    </subcellularLocation>
    <subcellularLocation>
        <location evidence="1">Host nucleus</location>
    </subcellularLocation>
</comment>
<comment type="PTM">
    <text evidence="1">Late in virus-infected cells, may be cleaved from a 56-kDa protein to a 53-kDa protein by a cellular caspase. This cleavage might be a marker for the onset of apoptosis in infected cells or have a specific function in virus host interaction.</text>
</comment>
<comment type="similarity">
    <text evidence="1">Belongs to the influenza viruses nucleoprotein family.</text>
</comment>
<evidence type="ECO:0000255" key="1">
    <source>
        <dbReference type="HAMAP-Rule" id="MF_04070"/>
    </source>
</evidence>
<evidence type="ECO:0000256" key="2">
    <source>
        <dbReference type="SAM" id="MobiDB-lite"/>
    </source>
</evidence>
<name>NCAP_I46A1</name>
<accession>P26079</accession>
<sequence>MASQGTKRSYEQMETGGERQNTTEIRASVGRMIGGIGRFYIQMCTELKLSDYEGRLIQNSITIERMVLSAFDERRNKYLEEHPSAGKDPKRTGGPIYRRIDGKWIRELILYDKEEISRIWRQANNGEDATAGLTHMMIWHSNLNDATYQRTRALVRTGMDPRMCSLMQGSTLPRRSGAAGAAVKGVGTMVMELIRMIKRGINDRNFWRGENGRRTRIAYERMCNILKGKFQTAAQKAMMDQVRESRNPGNAEIEDLIFLARSALILRGSVAHKSCLPACVYGLAVASGHDFEREGYSLVGIDPFRLLQNSQVFSLIRPNENPAHKSQLVWMACHSAAFEDLRVSSFIRGKRVVPRGQLSTRGVQIASNENMETMDSSTLELRSRYWAIRTRSGGNTNQQRASAGQISVQPTFSVQRNLPFERATVMAAFTGNTEGRTSDMRTEIIRIMESARPEDVSFQGRGVFELSDEKATSPIVPSFDMSNEGSYFFGDNAEEYDN</sequence>
<organism>
    <name type="scientific">Influenza A virus (strain A/Swine/Iowa/1946 H1N1)</name>
    <dbReference type="NCBI Taxonomy" id="383537"/>
    <lineage>
        <taxon>Viruses</taxon>
        <taxon>Riboviria</taxon>
        <taxon>Orthornavirae</taxon>
        <taxon>Negarnaviricota</taxon>
        <taxon>Polyploviricotina</taxon>
        <taxon>Insthoviricetes</taxon>
        <taxon>Articulavirales</taxon>
        <taxon>Orthomyxoviridae</taxon>
        <taxon>Alphainfluenzavirus</taxon>
        <taxon>Alphainfluenzavirus influenzae</taxon>
        <taxon>Influenza A virus</taxon>
    </lineage>
</organism>
<keyword id="KW-0002">3D-structure</keyword>
<keyword id="KW-0167">Capsid protein</keyword>
<keyword id="KW-1139">Helical capsid protein</keyword>
<keyword id="KW-1048">Host nucleus</keyword>
<keyword id="KW-0945">Host-virus interaction</keyword>
<keyword id="KW-0687">Ribonucleoprotein</keyword>
<keyword id="KW-0694">RNA-binding</keyword>
<keyword id="KW-0543">Viral nucleoprotein</keyword>
<keyword id="KW-1163">Viral penetration into host nucleus</keyword>
<keyword id="KW-0946">Virion</keyword>
<keyword id="KW-1160">Virus entry into host cell</keyword>
<dbReference type="EMBL" id="M63759">
    <property type="protein sequence ID" value="AAA52258.1"/>
    <property type="molecule type" value="Genomic_RNA"/>
</dbReference>
<dbReference type="PDB" id="7UC5">
    <property type="method" value="X-ray"/>
    <property type="resolution" value="1.95 A"/>
    <property type="chains" value="C/F=265-273"/>
</dbReference>
<dbReference type="PDBsum" id="7UC5"/>
<dbReference type="SMR" id="P26079"/>
<dbReference type="GO" id="GO:0019029">
    <property type="term" value="C:helical viral capsid"/>
    <property type="evidence" value="ECO:0007669"/>
    <property type="project" value="UniProtKB-UniRule"/>
</dbReference>
<dbReference type="GO" id="GO:0043657">
    <property type="term" value="C:host cell"/>
    <property type="evidence" value="ECO:0007669"/>
    <property type="project" value="GOC"/>
</dbReference>
<dbReference type="GO" id="GO:0042025">
    <property type="term" value="C:host cell nucleus"/>
    <property type="evidence" value="ECO:0007669"/>
    <property type="project" value="UniProtKB-SubCell"/>
</dbReference>
<dbReference type="GO" id="GO:1990904">
    <property type="term" value="C:ribonucleoprotein complex"/>
    <property type="evidence" value="ECO:0007669"/>
    <property type="project" value="UniProtKB-KW"/>
</dbReference>
<dbReference type="GO" id="GO:0019013">
    <property type="term" value="C:viral nucleocapsid"/>
    <property type="evidence" value="ECO:0007669"/>
    <property type="project" value="UniProtKB-UniRule"/>
</dbReference>
<dbReference type="GO" id="GO:0003723">
    <property type="term" value="F:RNA binding"/>
    <property type="evidence" value="ECO:0007669"/>
    <property type="project" value="UniProtKB-UniRule"/>
</dbReference>
<dbReference type="GO" id="GO:0005198">
    <property type="term" value="F:structural molecule activity"/>
    <property type="evidence" value="ECO:0007669"/>
    <property type="project" value="UniProtKB-UniRule"/>
</dbReference>
<dbReference type="GO" id="GO:0046718">
    <property type="term" value="P:symbiont entry into host cell"/>
    <property type="evidence" value="ECO:0007669"/>
    <property type="project" value="UniProtKB-KW"/>
</dbReference>
<dbReference type="GO" id="GO:0075732">
    <property type="term" value="P:viral penetration into host nucleus"/>
    <property type="evidence" value="ECO:0007669"/>
    <property type="project" value="UniProtKB-UniRule"/>
</dbReference>
<dbReference type="HAMAP" id="MF_04070">
    <property type="entry name" value="INFV_NCAP"/>
    <property type="match status" value="1"/>
</dbReference>
<dbReference type="InterPro" id="IPR002141">
    <property type="entry name" value="Flu_NP"/>
</dbReference>
<dbReference type="Pfam" id="PF00506">
    <property type="entry name" value="Flu_NP"/>
    <property type="match status" value="1"/>
</dbReference>
<dbReference type="SUPFAM" id="SSF161003">
    <property type="entry name" value="flu NP-like"/>
    <property type="match status" value="1"/>
</dbReference>
<protein>
    <recommendedName>
        <fullName evidence="1">Nucleoprotein</fullName>
    </recommendedName>
    <alternativeName>
        <fullName evidence="1">Nucleocapsid protein</fullName>
        <shortName evidence="1">Protein N</shortName>
    </alternativeName>
</protein>